<evidence type="ECO:0000255" key="1">
    <source>
        <dbReference type="HAMAP-Rule" id="MF_00335"/>
    </source>
</evidence>
<evidence type="ECO:0000255" key="2">
    <source>
        <dbReference type="PROSITE-ProRule" id="PRU01175"/>
    </source>
</evidence>
<evidence type="ECO:0000256" key="3">
    <source>
        <dbReference type="SAM" id="MobiDB-lite"/>
    </source>
</evidence>
<feature type="chain" id="PRO_0000344849" description="Ribonuclease Y">
    <location>
        <begin position="1"/>
        <end position="513"/>
    </location>
</feature>
<feature type="transmembrane region" description="Helical" evidence="1">
    <location>
        <begin position="6"/>
        <end position="26"/>
    </location>
</feature>
<feature type="domain" description="KH" evidence="1">
    <location>
        <begin position="203"/>
        <end position="288"/>
    </location>
</feature>
<feature type="domain" description="HD" evidence="2">
    <location>
        <begin position="329"/>
        <end position="422"/>
    </location>
</feature>
<feature type="region of interest" description="Disordered" evidence="3">
    <location>
        <begin position="35"/>
        <end position="59"/>
    </location>
</feature>
<protein>
    <recommendedName>
        <fullName evidence="1">Ribonuclease Y</fullName>
        <shortName evidence="1">RNase Y</shortName>
        <ecNumber evidence="1">3.1.-.-</ecNumber>
    </recommendedName>
</protein>
<keyword id="KW-1003">Cell membrane</keyword>
<keyword id="KW-0255">Endonuclease</keyword>
<keyword id="KW-0378">Hydrolase</keyword>
<keyword id="KW-0472">Membrane</keyword>
<keyword id="KW-0540">Nuclease</keyword>
<keyword id="KW-0694">RNA-binding</keyword>
<keyword id="KW-0812">Transmembrane</keyword>
<keyword id="KW-1133">Transmembrane helix</keyword>
<organism>
    <name type="scientific">Clostridium botulinum (strain Okra / Type B1)</name>
    <dbReference type="NCBI Taxonomy" id="498213"/>
    <lineage>
        <taxon>Bacteria</taxon>
        <taxon>Bacillati</taxon>
        <taxon>Bacillota</taxon>
        <taxon>Clostridia</taxon>
        <taxon>Eubacteriales</taxon>
        <taxon>Clostridiaceae</taxon>
        <taxon>Clostridium</taxon>
    </lineage>
</organism>
<dbReference type="EC" id="3.1.-.-" evidence="1"/>
<dbReference type="EMBL" id="CP000939">
    <property type="protein sequence ID" value="ACA44267.1"/>
    <property type="molecule type" value="Genomic_DNA"/>
</dbReference>
<dbReference type="RefSeq" id="WP_003399751.1">
    <property type="nucleotide sequence ID" value="NC_010516.1"/>
</dbReference>
<dbReference type="SMR" id="B1II34"/>
<dbReference type="KEGG" id="cbb:CLD_2237"/>
<dbReference type="HOGENOM" id="CLU_028328_1_0_9"/>
<dbReference type="Proteomes" id="UP000008541">
    <property type="component" value="Chromosome"/>
</dbReference>
<dbReference type="GO" id="GO:0005886">
    <property type="term" value="C:plasma membrane"/>
    <property type="evidence" value="ECO:0007669"/>
    <property type="project" value="UniProtKB-SubCell"/>
</dbReference>
<dbReference type="GO" id="GO:0003723">
    <property type="term" value="F:RNA binding"/>
    <property type="evidence" value="ECO:0007669"/>
    <property type="project" value="UniProtKB-UniRule"/>
</dbReference>
<dbReference type="GO" id="GO:0004521">
    <property type="term" value="F:RNA endonuclease activity"/>
    <property type="evidence" value="ECO:0007669"/>
    <property type="project" value="UniProtKB-UniRule"/>
</dbReference>
<dbReference type="GO" id="GO:0006402">
    <property type="term" value="P:mRNA catabolic process"/>
    <property type="evidence" value="ECO:0007669"/>
    <property type="project" value="UniProtKB-UniRule"/>
</dbReference>
<dbReference type="CDD" id="cd00077">
    <property type="entry name" value="HDc"/>
    <property type="match status" value="1"/>
</dbReference>
<dbReference type="CDD" id="cd22431">
    <property type="entry name" value="KH-I_RNaseY"/>
    <property type="match status" value="1"/>
</dbReference>
<dbReference type="FunFam" id="1.10.3210.10:FF:000003">
    <property type="entry name" value="Ribonuclease Y"/>
    <property type="match status" value="1"/>
</dbReference>
<dbReference type="FunFam" id="3.30.1370.10:FF:000006">
    <property type="entry name" value="Ribonuclease Y"/>
    <property type="match status" value="1"/>
</dbReference>
<dbReference type="Gene3D" id="1.10.3210.10">
    <property type="entry name" value="Hypothetical protein af1432"/>
    <property type="match status" value="1"/>
</dbReference>
<dbReference type="Gene3D" id="3.30.1370.10">
    <property type="entry name" value="K Homology domain, type 1"/>
    <property type="match status" value="1"/>
</dbReference>
<dbReference type="HAMAP" id="MF_00335">
    <property type="entry name" value="RNase_Y"/>
    <property type="match status" value="1"/>
</dbReference>
<dbReference type="InterPro" id="IPR003607">
    <property type="entry name" value="HD/PDEase_dom"/>
</dbReference>
<dbReference type="InterPro" id="IPR006674">
    <property type="entry name" value="HD_domain"/>
</dbReference>
<dbReference type="InterPro" id="IPR006675">
    <property type="entry name" value="HDIG_dom"/>
</dbReference>
<dbReference type="InterPro" id="IPR004087">
    <property type="entry name" value="KH_dom"/>
</dbReference>
<dbReference type="InterPro" id="IPR004088">
    <property type="entry name" value="KH_dom_type_1"/>
</dbReference>
<dbReference type="InterPro" id="IPR036612">
    <property type="entry name" value="KH_dom_type_1_sf"/>
</dbReference>
<dbReference type="InterPro" id="IPR017705">
    <property type="entry name" value="Ribonuclease_Y"/>
</dbReference>
<dbReference type="InterPro" id="IPR022711">
    <property type="entry name" value="RNase_Y_N"/>
</dbReference>
<dbReference type="NCBIfam" id="TIGR00277">
    <property type="entry name" value="HDIG"/>
    <property type="match status" value="1"/>
</dbReference>
<dbReference type="NCBIfam" id="TIGR03319">
    <property type="entry name" value="RNase_Y"/>
    <property type="match status" value="1"/>
</dbReference>
<dbReference type="PANTHER" id="PTHR12826">
    <property type="entry name" value="RIBONUCLEASE Y"/>
    <property type="match status" value="1"/>
</dbReference>
<dbReference type="PANTHER" id="PTHR12826:SF15">
    <property type="entry name" value="RIBONUCLEASE Y"/>
    <property type="match status" value="1"/>
</dbReference>
<dbReference type="Pfam" id="PF01966">
    <property type="entry name" value="HD"/>
    <property type="match status" value="1"/>
</dbReference>
<dbReference type="Pfam" id="PF00013">
    <property type="entry name" value="KH_1"/>
    <property type="match status" value="1"/>
</dbReference>
<dbReference type="Pfam" id="PF12072">
    <property type="entry name" value="RNase_Y_N"/>
    <property type="match status" value="1"/>
</dbReference>
<dbReference type="SMART" id="SM00471">
    <property type="entry name" value="HDc"/>
    <property type="match status" value="1"/>
</dbReference>
<dbReference type="SMART" id="SM00322">
    <property type="entry name" value="KH"/>
    <property type="match status" value="1"/>
</dbReference>
<dbReference type="SUPFAM" id="SSF54791">
    <property type="entry name" value="Eukaryotic type KH-domain (KH-domain type I)"/>
    <property type="match status" value="1"/>
</dbReference>
<dbReference type="SUPFAM" id="SSF109604">
    <property type="entry name" value="HD-domain/PDEase-like"/>
    <property type="match status" value="1"/>
</dbReference>
<dbReference type="PROSITE" id="PS51831">
    <property type="entry name" value="HD"/>
    <property type="match status" value="1"/>
</dbReference>
<dbReference type="PROSITE" id="PS50084">
    <property type="entry name" value="KH_TYPE_1"/>
    <property type="match status" value="1"/>
</dbReference>
<comment type="function">
    <text evidence="1">Endoribonuclease that initiates mRNA decay.</text>
</comment>
<comment type="subcellular location">
    <subcellularLocation>
        <location evidence="1">Cell membrane</location>
        <topology evidence="1">Single-pass membrane protein</topology>
    </subcellularLocation>
</comment>
<comment type="similarity">
    <text evidence="1">Belongs to the RNase Y family.</text>
</comment>
<proteinExistence type="inferred from homology"/>
<reference key="1">
    <citation type="journal article" date="2007" name="PLoS ONE">
        <title>Analysis of the neurotoxin complex genes in Clostridium botulinum A1-A4 and B1 strains: BoNT/A3, /Ba4 and /B1 clusters are located within plasmids.</title>
        <authorList>
            <person name="Smith T.J."/>
            <person name="Hill K.K."/>
            <person name="Foley B.T."/>
            <person name="Detter J.C."/>
            <person name="Munk A.C."/>
            <person name="Bruce D.C."/>
            <person name="Doggett N.A."/>
            <person name="Smith L.A."/>
            <person name="Marks J.D."/>
            <person name="Xie G."/>
            <person name="Brettin T.S."/>
        </authorList>
    </citation>
    <scope>NUCLEOTIDE SEQUENCE [LARGE SCALE GENOMIC DNA]</scope>
    <source>
        <strain>Okra / Type B1</strain>
    </source>
</reference>
<accession>B1II34</accession>
<gene>
    <name evidence="1" type="primary">rny</name>
    <name type="ordered locus">CLD_2237</name>
</gene>
<sequence length="513" mass="58101">MGPTKYIIIAVVIIIICVILGLYVVDKKAKEKLSEASKEARRLKEEAERDAEAKKKEAILEAKEESHKLRAEVERENRERRNEVQRLERRIIQKEEALDKKSEALENKEEALNKKQQKIEDVETHMEELHEKQRTELERISGLTTEQAKEFLLEQVRKEVKHETAVMIKEIETKAKEEADKRAREVITYAIQRCAADHVAETTVHVVNLPNDEMKGRIIGREGRNIRTLETLTGVDLIIDDTPEAVILSGFDPIRREVARIALEKLIVDGRIHPARIEEMVEKAKKEVEVSIKEEGEQATFETGIHGLHIELIRLLGRLKYRTSYGQNVLKHSIEVSHLAGLMASELGIDPTLAKRVGLLHDIGKAVDHEVEGPHAIIGSEIAKKYRESALVVNAIGAHHGDMEPQSLEAILVQAADAISAARPGARRETLEAYIKRLEKLEEIANECEGVEKSYAIQAGREIRIMVKPEVLDDTGCIEMARNIVKQIESELEYPGQIKVNVIRETRAIEYAK</sequence>
<name>RNY_CLOBK</name>